<evidence type="ECO:0000250" key="1">
    <source>
        <dbReference type="UniProtKB" id="B0YD89"/>
    </source>
</evidence>
<evidence type="ECO:0000250" key="2">
    <source>
        <dbReference type="UniProtKB" id="O34002"/>
    </source>
</evidence>
<evidence type="ECO:0000250" key="3">
    <source>
        <dbReference type="UniProtKB" id="P31660"/>
    </source>
</evidence>
<evidence type="ECO:0000255" key="4"/>
<evidence type="ECO:0000269" key="5">
    <source>
    </source>
</evidence>
<evidence type="ECO:0000303" key="6">
    <source>
    </source>
</evidence>
<evidence type="ECO:0000305" key="7"/>
<evidence type="ECO:0000312" key="8">
    <source>
        <dbReference type="EMBL" id="CAZ64274.1"/>
    </source>
</evidence>
<accession>C7C435</accession>
<comment type="function">
    <text evidence="5">Component of the methylcitrate cycle that catalyzes the synthesis of (2S,3S)-2-methylcitrate from propionyl-CoA and oxaloacetate. Plays an important role in detoxification of propionyl-CoA, an inhibitor of both primary and secondary metabolism. Also has citrate synthase activity using as substrates acetyl-CoA and oxaloacetate.</text>
</comment>
<comment type="catalytic activity">
    <reaction evidence="5">
        <text>propanoyl-CoA + oxaloacetate + H2O = (2S,3S)-2-methylcitrate + CoA + H(+)</text>
        <dbReference type="Rhea" id="RHEA:23780"/>
        <dbReference type="ChEBI" id="CHEBI:15377"/>
        <dbReference type="ChEBI" id="CHEBI:15378"/>
        <dbReference type="ChEBI" id="CHEBI:16452"/>
        <dbReference type="ChEBI" id="CHEBI:57287"/>
        <dbReference type="ChEBI" id="CHEBI:57392"/>
        <dbReference type="ChEBI" id="CHEBI:58853"/>
        <dbReference type="EC" id="2.3.3.5"/>
    </reaction>
</comment>
<comment type="catalytic activity">
    <reaction evidence="5">
        <text>oxaloacetate + acetyl-CoA + H2O = citrate + CoA + H(+)</text>
        <dbReference type="Rhea" id="RHEA:16845"/>
        <dbReference type="ChEBI" id="CHEBI:15377"/>
        <dbReference type="ChEBI" id="CHEBI:15378"/>
        <dbReference type="ChEBI" id="CHEBI:16452"/>
        <dbReference type="ChEBI" id="CHEBI:16947"/>
        <dbReference type="ChEBI" id="CHEBI:57287"/>
        <dbReference type="ChEBI" id="CHEBI:57288"/>
        <dbReference type="EC" id="2.3.3.16"/>
    </reaction>
</comment>
<comment type="biophysicochemical properties">
    <kinetics>
        <KM evidence="5">1.94 uM for propionyl-CoA</KM>
        <KM evidence="5">1.26 uM for acetyl-CoA</KM>
        <KM evidence="5">2.58 uM for oxaloacetate (in presence of propionyl-CoA)</KM>
        <KM evidence="5">3.85 uM for propionyl-CoA (in presence of acetyl-CoA)</KM>
    </kinetics>
    <phDependence>
        <text evidence="5">Optimum pH is 8.0-9.0.</text>
    </phDependence>
    <temperatureDependence>
        <text evidence="5">Optimum temperature is 49-54 degrees Celsius.</text>
    </temperatureDependence>
</comment>
<comment type="pathway">
    <text evidence="7">Organic acid metabolism; propanoate degradation.</text>
</comment>
<comment type="subunit">
    <text evidence="1">Homodimer.</text>
</comment>
<comment type="subcellular location">
    <subcellularLocation>
        <location evidence="7">Mitochondrion matrix</location>
    </subcellularLocation>
</comment>
<comment type="similarity">
    <text evidence="7">Belongs to the citrate synthase family.</text>
</comment>
<name>PRPC_FUSSL</name>
<dbReference type="EC" id="2.3.3.5" evidence="5"/>
<dbReference type="EC" id="2.3.3.16" evidence="5"/>
<dbReference type="EMBL" id="FN400886">
    <property type="protein sequence ID" value="CAZ64274.1"/>
    <property type="molecule type" value="mRNA"/>
</dbReference>
<dbReference type="SMR" id="C7C435"/>
<dbReference type="VEuPathDB" id="FungiDB:B0J15DRAFT_487353"/>
<dbReference type="UniPathway" id="UPA00946"/>
<dbReference type="GO" id="GO:0005759">
    <property type="term" value="C:mitochondrial matrix"/>
    <property type="evidence" value="ECO:0007669"/>
    <property type="project" value="UniProtKB-SubCell"/>
</dbReference>
<dbReference type="GO" id="GO:0050440">
    <property type="term" value="F:2-methylcitrate synthase activity"/>
    <property type="evidence" value="ECO:0007669"/>
    <property type="project" value="UniProtKB-EC"/>
</dbReference>
<dbReference type="GO" id="GO:0004108">
    <property type="term" value="F:citrate (Si)-synthase activity"/>
    <property type="evidence" value="ECO:0007669"/>
    <property type="project" value="TreeGrafter"/>
</dbReference>
<dbReference type="GO" id="GO:0005975">
    <property type="term" value="P:carbohydrate metabolic process"/>
    <property type="evidence" value="ECO:0007669"/>
    <property type="project" value="TreeGrafter"/>
</dbReference>
<dbReference type="GO" id="GO:0006099">
    <property type="term" value="P:tricarboxylic acid cycle"/>
    <property type="evidence" value="ECO:0007669"/>
    <property type="project" value="TreeGrafter"/>
</dbReference>
<dbReference type="FunFam" id="1.10.230.10:FF:000001">
    <property type="entry name" value="Citrate synthase"/>
    <property type="match status" value="1"/>
</dbReference>
<dbReference type="FunFam" id="1.10.580.10:FF:000001">
    <property type="entry name" value="Citrate synthase"/>
    <property type="match status" value="1"/>
</dbReference>
<dbReference type="Gene3D" id="1.10.580.10">
    <property type="entry name" value="Citrate Synthase, domain 1"/>
    <property type="match status" value="1"/>
</dbReference>
<dbReference type="Gene3D" id="1.10.230.10">
    <property type="entry name" value="Cytochrome P450-Terp, domain 2"/>
    <property type="match status" value="1"/>
</dbReference>
<dbReference type="InterPro" id="IPR016142">
    <property type="entry name" value="Citrate_synth-like_lrg_a-sub"/>
</dbReference>
<dbReference type="InterPro" id="IPR016143">
    <property type="entry name" value="Citrate_synth-like_sm_a-sub"/>
</dbReference>
<dbReference type="InterPro" id="IPR002020">
    <property type="entry name" value="Citrate_synthase"/>
</dbReference>
<dbReference type="InterPro" id="IPR019810">
    <property type="entry name" value="Citrate_synthase_AS"/>
</dbReference>
<dbReference type="InterPro" id="IPR036969">
    <property type="entry name" value="Citrate_synthase_sf"/>
</dbReference>
<dbReference type="NCBIfam" id="NF007128">
    <property type="entry name" value="PRK09569.1"/>
    <property type="match status" value="1"/>
</dbReference>
<dbReference type="PANTHER" id="PTHR11739">
    <property type="entry name" value="CITRATE SYNTHASE"/>
    <property type="match status" value="1"/>
</dbReference>
<dbReference type="PANTHER" id="PTHR11739:SF15">
    <property type="entry name" value="CITRATE SYNTHASE 3, MITOCHONDRIAL"/>
    <property type="match status" value="1"/>
</dbReference>
<dbReference type="Pfam" id="PF00285">
    <property type="entry name" value="Citrate_synt"/>
    <property type="match status" value="1"/>
</dbReference>
<dbReference type="PRINTS" id="PR00143">
    <property type="entry name" value="CITRTSNTHASE"/>
</dbReference>
<dbReference type="SUPFAM" id="SSF48256">
    <property type="entry name" value="Citrate synthase"/>
    <property type="match status" value="1"/>
</dbReference>
<dbReference type="PROSITE" id="PS00480">
    <property type="entry name" value="CITRATE_SYNTHASE"/>
    <property type="match status" value="1"/>
</dbReference>
<gene>
    <name evidence="6" type="primary">mcsA</name>
</gene>
<feature type="transit peptide" description="Mitochondrion" evidence="4">
    <location>
        <begin position="1"/>
        <end position="29"/>
    </location>
</feature>
<feature type="chain" id="PRO_5000565170" description="2-methylcitrate synthase, mitochondrial" evidence="8">
    <location>
        <begin position="30"/>
        <end position="472"/>
    </location>
</feature>
<feature type="active site" evidence="2">
    <location>
        <position position="307"/>
    </location>
</feature>
<feature type="active site" evidence="2">
    <location>
        <position position="353"/>
    </location>
</feature>
<feature type="active site" evidence="2">
    <location>
        <position position="410"/>
    </location>
</feature>
<feature type="binding site" description="in chain B" evidence="1">
    <location>
        <position position="75"/>
    </location>
    <ligand>
        <name>CoA</name>
        <dbReference type="ChEBI" id="CHEBI:57287"/>
        <note>ligand shared between homodimeric partners</note>
    </ligand>
</feature>
<feature type="binding site" description="in chain A" evidence="1">
    <location>
        <position position="193"/>
    </location>
    <ligand>
        <name>CoA</name>
        <dbReference type="ChEBI" id="CHEBI:57287"/>
        <note>ligand shared between homodimeric partners</note>
    </ligand>
</feature>
<feature type="binding site" description="in chain A" evidence="1">
    <location>
        <position position="271"/>
    </location>
    <ligand>
        <name>oxaloacetate</name>
        <dbReference type="ChEBI" id="CHEBI:16452"/>
        <note>ligand shared between homodimeric partners</note>
    </ligand>
</feature>
<feature type="binding site" description="in chain B" evidence="1">
    <location>
        <position position="306"/>
    </location>
    <ligand>
        <name>CoA</name>
        <dbReference type="ChEBI" id="CHEBI:57287"/>
        <note>ligand shared between homodimeric partners</note>
    </ligand>
</feature>
<feature type="binding site" description="in chain B" evidence="1">
    <location>
        <position position="348"/>
    </location>
    <ligand>
        <name>CoA</name>
        <dbReference type="ChEBI" id="CHEBI:57287"/>
        <note>ligand shared between homodimeric partners</note>
    </ligand>
</feature>
<feature type="binding site" description="in chain B" evidence="1">
    <location>
        <position position="350"/>
    </location>
    <ligand>
        <name>CoA</name>
        <dbReference type="ChEBI" id="CHEBI:57287"/>
        <note>ligand shared between homodimeric partners</note>
    </ligand>
</feature>
<feature type="binding site" description="in chain B" evidence="1">
    <location>
        <position position="351"/>
    </location>
    <ligand>
        <name>CoA</name>
        <dbReference type="ChEBI" id="CHEBI:57287"/>
        <note>ligand shared between homodimeric partners</note>
    </ligand>
</feature>
<feature type="binding site" description="in chain A" evidence="1">
    <location>
        <position position="353"/>
    </location>
    <ligand>
        <name>oxaloacetate</name>
        <dbReference type="ChEBI" id="CHEBI:16452"/>
        <note>ligand shared between homodimeric partners</note>
    </ligand>
</feature>
<feature type="binding site" description="in chain A" evidence="1">
    <location>
        <position position="362"/>
    </location>
    <ligand>
        <name>oxaloacetate</name>
        <dbReference type="ChEBI" id="CHEBI:16452"/>
        <note>ligand shared between homodimeric partners</note>
    </ligand>
</feature>
<feature type="binding site" description="in chain B" evidence="1">
    <location>
        <position position="402"/>
    </location>
    <ligand>
        <name>CoA</name>
        <dbReference type="ChEBI" id="CHEBI:57287"/>
        <note>ligand shared between homodimeric partners</note>
    </ligand>
</feature>
<feature type="binding site" description="in chain B" evidence="1">
    <location>
        <position position="403"/>
    </location>
    <ligand>
        <name>CoA</name>
        <dbReference type="ChEBI" id="CHEBI:57287"/>
        <note>ligand shared between homodimeric partners</note>
    </ligand>
</feature>
<feature type="binding site" description="in chain B" evidence="1">
    <location>
        <position position="408"/>
    </location>
    <ligand>
        <name>CoA</name>
        <dbReference type="ChEBI" id="CHEBI:57287"/>
        <note>ligand shared between homodimeric partners</note>
    </ligand>
</feature>
<feature type="binding site" description="in chain A" evidence="1">
    <location>
        <position position="436"/>
    </location>
    <ligand>
        <name>oxaloacetate</name>
        <dbReference type="ChEBI" id="CHEBI:16452"/>
        <note>ligand shared between homodimeric partners</note>
    </ligand>
</feature>
<feature type="binding site" description="in chain B" evidence="1">
    <location>
        <position position="456"/>
    </location>
    <ligand>
        <name>oxaloacetate</name>
        <dbReference type="ChEBI" id="CHEBI:16452"/>
        <note>ligand shared between homodimeric partners</note>
    </ligand>
</feature>
<keyword id="KW-0012">Acyltransferase</keyword>
<keyword id="KW-0496">Mitochondrion</keyword>
<keyword id="KW-0808">Transferase</keyword>
<keyword id="KW-0809">Transit peptide</keyword>
<sequence>MALNLTTSRRALGSLKPLTRAAFVGARGYATAEPDLKATLREAIPAKRELLKKVKAHANKTIGEVKVENTLGGMRGLKAMVWEGSVLDANEGIRFHGRTIKDCQKELPKGKTGTEMLPEAMFWLLLTGQVPSTNQIRVFSRELAEKAQIPEFVAKMLDNFPKDLHPMTQFAMAVSALNYESKFAKAYEQGLNKADYWEPTFDDCISLLAKLPTIAAKIYQNSYRGGGALPAEVDLEQDWSYNFAAMLGKGGKENENFQDLLRLYLALHGDHEGGNVSAHATHLVGSALSDPFLSYSAGLQGLAGPLHGLAAQEVLRWILQMKEAIPAKYTEQDVNDYLWSTLNSGRVVPGYGHAVLRKPDPRFEALMDYAAARPEIAQDPVFQLVQKNSQIAPEVLKKHGKTKNPYPNVDSSSGVLFHHYGFHETLYYTATFGVSRGLGPLAQLVWDRALGLPIERPKSINLEGILKQVEGQ</sequence>
<protein>
    <recommendedName>
        <fullName evidence="7">2-methylcitrate synthase, mitochondrial</fullName>
        <shortName evidence="6">Methylcitrate synthase</shortName>
        <ecNumber evidence="5">2.3.3.5</ecNumber>
    </recommendedName>
    <alternativeName>
        <fullName evidence="3">(2S,3S)-2-methylcitrate synthase</fullName>
    </alternativeName>
    <alternativeName>
        <fullName evidence="7">Citrate synthase 2</fullName>
        <ecNumber evidence="5">2.3.3.16</ecNumber>
    </alternativeName>
</protein>
<proteinExistence type="evidence at protein level"/>
<organism>
    <name type="scientific">Fusarium solani</name>
    <name type="common">Filamentous fungus</name>
    <dbReference type="NCBI Taxonomy" id="169388"/>
    <lineage>
        <taxon>Eukaryota</taxon>
        <taxon>Fungi</taxon>
        <taxon>Dikarya</taxon>
        <taxon>Ascomycota</taxon>
        <taxon>Pezizomycotina</taxon>
        <taxon>Sordariomycetes</taxon>
        <taxon>Hypocreomycetidae</taxon>
        <taxon>Hypocreales</taxon>
        <taxon>Nectriaceae</taxon>
        <taxon>Fusarium</taxon>
        <taxon>Fusarium solani species complex</taxon>
    </lineage>
</organism>
<reference key="1">
    <citation type="journal article" date="2009" name="Microbiology">
        <title>Methylcitrate cycle activation during adaptation of Fusarium solani and Fusarium verticillioides to propionyl-CoA-generating carbon sources.</title>
        <authorList>
            <person name="Domin N."/>
            <person name="Wilson D."/>
            <person name="Brock M."/>
        </authorList>
    </citation>
    <scope>NUCLEOTIDE SEQUENCE [MRNA]</scope>
    <scope>FUNCTION</scope>
    <scope>CATALYTIC ACTIVITY</scope>
    <scope>BIOPHYSICOCHEMICAL PROPERTIES</scope>
    <source>
        <strain>IP2330.95</strain>
    </source>
</reference>